<sequence>MPLTPPPDHSITYRILAVGLCSCCAIYAATRSTLPHTGDNLHSLPYGGKYSDGTKSICYSGPGPTPDIPTHLPALLVLVLVVAIYASSRLDFSVNYRCSCRVHNRSGQ</sequence>
<gene>
    <name type="ORF">ORF3</name>
</gene>
<proteinExistence type="inferred from homology"/>
<reference key="1">
    <citation type="journal article" date="1992" name="J. Gen. Virol.">
        <title>The nucleotide sequence and genome organization of strawberry mild yellow edge-associated potexvirus.</title>
        <authorList>
            <person name="Jelkmann W."/>
            <person name="Maiss E."/>
            <person name="Martin R.R."/>
        </authorList>
    </citation>
    <scope>NUCLEOTIDE SEQUENCE [GENOMIC RNA]</scope>
    <source>
        <strain>MY-18</strain>
    </source>
</reference>
<reference key="2">
    <citation type="journal article" date="2005" name="Mol. Plant Microbe Interact.">
        <title>A new cell-to-cell transport model for Potexviruses.</title>
        <authorList>
            <person name="Verchot-Lubicz J."/>
        </authorList>
    </citation>
    <scope>REVIEW</scope>
</reference>
<organism>
    <name type="scientific">Strawberry mild yellow edge-associated virus</name>
    <name type="common">SMYEaV</name>
    <dbReference type="NCBI Taxonomy" id="12187"/>
    <lineage>
        <taxon>Viruses</taxon>
        <taxon>Riboviria</taxon>
        <taxon>Orthornavirae</taxon>
        <taxon>Kitrinoviricota</taxon>
        <taxon>Alsuviricetes</taxon>
        <taxon>Tymovirales</taxon>
        <taxon>Alphaflexiviridae</taxon>
        <taxon>Potexvirus</taxon>
    </lineage>
</organism>
<accession>Q00842</accession>
<evidence type="ECO:0000250" key="1"/>
<evidence type="ECO:0000255" key="2"/>
<evidence type="ECO:0000305" key="3"/>
<protein>
    <recommendedName>
        <fullName>Movement protein TGB2</fullName>
    </recommendedName>
    <alternativeName>
        <fullName>12 kDa protein</fullName>
    </alternativeName>
    <alternativeName>
        <fullName>Triple gene block 2 protein</fullName>
        <shortName>TGBp2</shortName>
    </alternativeName>
</protein>
<dbReference type="EMBL" id="D12517">
    <property type="protein sequence ID" value="BAA02084.1"/>
    <property type="molecule type" value="Genomic_RNA"/>
</dbReference>
<dbReference type="PIR" id="JQ1428">
    <property type="entry name" value="JQ1428"/>
</dbReference>
<dbReference type="RefSeq" id="NP_620644.1">
    <property type="nucleotide sequence ID" value="NC_003794.1"/>
</dbReference>
<dbReference type="SMR" id="Q00842"/>
<dbReference type="KEGG" id="vg:944374"/>
<dbReference type="OrthoDB" id="20634at10239"/>
<dbReference type="Proteomes" id="UP000007225">
    <property type="component" value="Genome"/>
</dbReference>
<dbReference type="GO" id="GO:0044167">
    <property type="term" value="C:host cell endoplasmic reticulum membrane"/>
    <property type="evidence" value="ECO:0007669"/>
    <property type="project" value="UniProtKB-SubCell"/>
</dbReference>
<dbReference type="GO" id="GO:0016020">
    <property type="term" value="C:membrane"/>
    <property type="evidence" value="ECO:0007669"/>
    <property type="project" value="UniProtKB-KW"/>
</dbReference>
<dbReference type="GO" id="GO:0046740">
    <property type="term" value="P:transport of virus in host, cell to cell"/>
    <property type="evidence" value="ECO:0007669"/>
    <property type="project" value="UniProtKB-KW"/>
</dbReference>
<dbReference type="InterPro" id="IPR001896">
    <property type="entry name" value="Plant_vir_prot"/>
</dbReference>
<dbReference type="Pfam" id="PF01307">
    <property type="entry name" value="Plant_vir_prot"/>
    <property type="match status" value="1"/>
</dbReference>
<name>TGB2_SMYEA</name>
<organismHost>
    <name type="scientific">Chenopodium quinoa</name>
    <name type="common">Quinoa</name>
    <dbReference type="NCBI Taxonomy" id="63459"/>
</organismHost>
<organismHost>
    <name type="scientific">Fragaria vesca</name>
    <name type="common">Woodland strawberry</name>
    <name type="synonym">Potentilla vesca</name>
    <dbReference type="NCBI Taxonomy" id="57918"/>
</organismHost>
<organismHost>
    <name type="scientific">Rubus rosifolius</name>
    <dbReference type="NCBI Taxonomy" id="59498"/>
</organismHost>
<keyword id="KW-1038">Host endoplasmic reticulum</keyword>
<keyword id="KW-1043">Host membrane</keyword>
<keyword id="KW-0472">Membrane</keyword>
<keyword id="KW-1185">Reference proteome</keyword>
<keyword id="KW-0812">Transmembrane</keyword>
<keyword id="KW-1133">Transmembrane helix</keyword>
<keyword id="KW-0813">Transport</keyword>
<keyword id="KW-0916">Viral movement protein</keyword>
<comment type="function">
    <text evidence="1">Plays a role in viral cell-to-cell propagation, by facilitating genome transport to neighboring plant cells through plasmosdesmata,.</text>
</comment>
<comment type="subcellular location">
    <subcellularLocation>
        <location evidence="1">Host endoplasmic reticulum membrane</location>
    </subcellularLocation>
</comment>
<comment type="miscellaneous">
    <text>TGBp1, TGBp2 and TGBp3 seem to act together for cell-to-cell propagation. TGBp1 is the main movement protein that physically cross the plasmodesma with the viral genome. TGBp2 and TGBp3 would facilitate TGBp1 function.</text>
</comment>
<comment type="similarity">
    <text evidence="3">Belongs to the Tymovirales TGBp2 protein family.</text>
</comment>
<feature type="chain" id="PRO_0000222592" description="Movement protein TGB2">
    <location>
        <begin position="1"/>
        <end position="108"/>
    </location>
</feature>
<feature type="topological domain" description="Cytoplasmic" evidence="1">
    <location>
        <begin position="1"/>
        <end position="14"/>
    </location>
</feature>
<feature type="transmembrane region" description="Helical" evidence="2">
    <location>
        <begin position="15"/>
        <end position="31"/>
    </location>
</feature>
<feature type="topological domain" description="Lumenal" evidence="1">
    <location>
        <begin position="32"/>
        <end position="67"/>
    </location>
</feature>
<feature type="transmembrane region" description="Helical" evidence="2">
    <location>
        <begin position="68"/>
        <end position="85"/>
    </location>
</feature>
<feature type="topological domain" description="Cytoplasmic" evidence="1">
    <location>
        <begin position="86"/>
        <end position="108"/>
    </location>
</feature>